<feature type="chain" id="PRO_0000092090" description="Putative ABC transporter ATP-binding protein SAV_3608">
    <location>
        <begin position="1"/>
        <end position="262"/>
    </location>
</feature>
<feature type="domain" description="ABC transporter" evidence="2">
    <location>
        <begin position="18"/>
        <end position="248"/>
    </location>
</feature>
<feature type="binding site" evidence="2">
    <location>
        <begin position="51"/>
        <end position="58"/>
    </location>
    <ligand>
        <name>ATP</name>
        <dbReference type="ChEBI" id="CHEBI:30616"/>
    </ligand>
</feature>
<evidence type="ECO:0000250" key="1"/>
<evidence type="ECO:0000255" key="2">
    <source>
        <dbReference type="PROSITE-ProRule" id="PRU00434"/>
    </source>
</evidence>
<evidence type="ECO:0000305" key="3"/>
<comment type="function">
    <text evidence="1">Probably part of an ABC transporter complex. Responsible for energy coupling to the transport system (By similarity).</text>
</comment>
<comment type="subcellular location">
    <subcellularLocation>
        <location evidence="1">Cell membrane</location>
        <topology evidence="1">Peripheral membrane protein</topology>
    </subcellularLocation>
</comment>
<comment type="similarity">
    <text evidence="3">Belongs to the ABC transporter superfamily.</text>
</comment>
<protein>
    <recommendedName>
        <fullName>Putative ABC transporter ATP-binding protein SAV_3608</fullName>
        <ecNumber>7.-.-.-</ecNumber>
    </recommendedName>
</protein>
<name>Y3608_STRAW</name>
<sequence length="262" mass="27819">MNSPAPVGSPAPVSAPSLDVAGLAFAYPDGHQALFGVDFRVERGERVALLGPNGAGKTTLVLHLNGILTGGAGTVTVAGLPVGKRHMAQIRRKVGIVFQDPDDQLFMPTVREDVAFGPAAAGLTGAELEARVDRALDQVGMAEFKGRPPHHLSFGQRRRVAVATVLAMEPEILVLDEPSSNLDPASRRELADILRSLDVTVLMVTHDLPYALELCPRSLILSEGVIAADGRTGELLADDTLMRAHRLELPFGFDPRSVTMGA</sequence>
<dbReference type="EC" id="7.-.-.-"/>
<dbReference type="EMBL" id="BA000030">
    <property type="protein sequence ID" value="BAC71320.1"/>
    <property type="molecule type" value="Genomic_DNA"/>
</dbReference>
<dbReference type="SMR" id="Q82HA2"/>
<dbReference type="KEGG" id="sma:SAVERM_3608"/>
<dbReference type="eggNOG" id="COG1122">
    <property type="taxonomic scope" value="Bacteria"/>
</dbReference>
<dbReference type="HOGENOM" id="CLU_000604_1_22_11"/>
<dbReference type="Proteomes" id="UP000000428">
    <property type="component" value="Chromosome"/>
</dbReference>
<dbReference type="GO" id="GO:0043190">
    <property type="term" value="C:ATP-binding cassette (ABC) transporter complex"/>
    <property type="evidence" value="ECO:0007669"/>
    <property type="project" value="TreeGrafter"/>
</dbReference>
<dbReference type="GO" id="GO:0005524">
    <property type="term" value="F:ATP binding"/>
    <property type="evidence" value="ECO:0007669"/>
    <property type="project" value="UniProtKB-KW"/>
</dbReference>
<dbReference type="GO" id="GO:0016887">
    <property type="term" value="F:ATP hydrolysis activity"/>
    <property type="evidence" value="ECO:0007669"/>
    <property type="project" value="InterPro"/>
</dbReference>
<dbReference type="GO" id="GO:0042626">
    <property type="term" value="F:ATPase-coupled transmembrane transporter activity"/>
    <property type="evidence" value="ECO:0007669"/>
    <property type="project" value="TreeGrafter"/>
</dbReference>
<dbReference type="GO" id="GO:0006824">
    <property type="term" value="P:cobalt ion transport"/>
    <property type="evidence" value="ECO:0007669"/>
    <property type="project" value="InterPro"/>
</dbReference>
<dbReference type="CDD" id="cd03225">
    <property type="entry name" value="ABC_cobalt_CbiO_domain1"/>
    <property type="match status" value="1"/>
</dbReference>
<dbReference type="FunFam" id="3.40.50.300:FF:000224">
    <property type="entry name" value="Energy-coupling factor transporter ATP-binding protein EcfA"/>
    <property type="match status" value="1"/>
</dbReference>
<dbReference type="Gene3D" id="3.40.50.300">
    <property type="entry name" value="P-loop containing nucleotide triphosphate hydrolases"/>
    <property type="match status" value="1"/>
</dbReference>
<dbReference type="InterPro" id="IPR003593">
    <property type="entry name" value="AAA+_ATPase"/>
</dbReference>
<dbReference type="InterPro" id="IPR003439">
    <property type="entry name" value="ABC_transporter-like_ATP-bd"/>
</dbReference>
<dbReference type="InterPro" id="IPR017871">
    <property type="entry name" value="ABC_transporter-like_CS"/>
</dbReference>
<dbReference type="InterPro" id="IPR015856">
    <property type="entry name" value="ABC_transpr_CbiO/EcfA_su"/>
</dbReference>
<dbReference type="InterPro" id="IPR005876">
    <property type="entry name" value="Co_trans_ATP-bd"/>
</dbReference>
<dbReference type="InterPro" id="IPR050095">
    <property type="entry name" value="ECF_ABC_transporter_ATP-bd"/>
</dbReference>
<dbReference type="InterPro" id="IPR027417">
    <property type="entry name" value="P-loop_NTPase"/>
</dbReference>
<dbReference type="NCBIfam" id="TIGR01166">
    <property type="entry name" value="cbiO"/>
    <property type="match status" value="1"/>
</dbReference>
<dbReference type="PANTHER" id="PTHR43553:SF24">
    <property type="entry name" value="ENERGY-COUPLING FACTOR TRANSPORTER ATP-BINDING PROTEIN ECFA1"/>
    <property type="match status" value="1"/>
</dbReference>
<dbReference type="PANTHER" id="PTHR43553">
    <property type="entry name" value="HEAVY METAL TRANSPORTER"/>
    <property type="match status" value="1"/>
</dbReference>
<dbReference type="Pfam" id="PF00005">
    <property type="entry name" value="ABC_tran"/>
    <property type="match status" value="1"/>
</dbReference>
<dbReference type="SMART" id="SM00382">
    <property type="entry name" value="AAA"/>
    <property type="match status" value="1"/>
</dbReference>
<dbReference type="SUPFAM" id="SSF52540">
    <property type="entry name" value="P-loop containing nucleoside triphosphate hydrolases"/>
    <property type="match status" value="1"/>
</dbReference>
<dbReference type="PROSITE" id="PS00211">
    <property type="entry name" value="ABC_TRANSPORTER_1"/>
    <property type="match status" value="1"/>
</dbReference>
<dbReference type="PROSITE" id="PS50893">
    <property type="entry name" value="ABC_TRANSPORTER_2"/>
    <property type="match status" value="1"/>
</dbReference>
<proteinExistence type="inferred from homology"/>
<keyword id="KW-0067">ATP-binding</keyword>
<keyword id="KW-1003">Cell membrane</keyword>
<keyword id="KW-0472">Membrane</keyword>
<keyword id="KW-0547">Nucleotide-binding</keyword>
<keyword id="KW-1185">Reference proteome</keyword>
<keyword id="KW-1278">Translocase</keyword>
<keyword id="KW-0813">Transport</keyword>
<accession>Q82HA2</accession>
<organism>
    <name type="scientific">Streptomyces avermitilis (strain ATCC 31267 / DSM 46492 / JCM 5070 / NBRC 14893 / NCIMB 12804 / NRRL 8165 / MA-4680)</name>
    <dbReference type="NCBI Taxonomy" id="227882"/>
    <lineage>
        <taxon>Bacteria</taxon>
        <taxon>Bacillati</taxon>
        <taxon>Actinomycetota</taxon>
        <taxon>Actinomycetes</taxon>
        <taxon>Kitasatosporales</taxon>
        <taxon>Streptomycetaceae</taxon>
        <taxon>Streptomyces</taxon>
    </lineage>
</organism>
<gene>
    <name type="ordered locus">SAV_3608</name>
</gene>
<reference key="1">
    <citation type="journal article" date="2001" name="Proc. Natl. Acad. Sci. U.S.A.">
        <title>Genome sequence of an industrial microorganism Streptomyces avermitilis: deducing the ability of producing secondary metabolites.</title>
        <authorList>
            <person name="Omura S."/>
            <person name="Ikeda H."/>
            <person name="Ishikawa J."/>
            <person name="Hanamoto A."/>
            <person name="Takahashi C."/>
            <person name="Shinose M."/>
            <person name="Takahashi Y."/>
            <person name="Horikawa H."/>
            <person name="Nakazawa H."/>
            <person name="Osonoe T."/>
            <person name="Kikuchi H."/>
            <person name="Shiba T."/>
            <person name="Sakaki Y."/>
            <person name="Hattori M."/>
        </authorList>
    </citation>
    <scope>NUCLEOTIDE SEQUENCE [LARGE SCALE GENOMIC DNA]</scope>
    <source>
        <strain>ATCC 31267 / DSM 46492 / JCM 5070 / NBRC 14893 / NCIMB 12804 / NRRL 8165 / MA-4680</strain>
    </source>
</reference>
<reference key="2">
    <citation type="journal article" date="2003" name="Nat. Biotechnol.">
        <title>Complete genome sequence and comparative analysis of the industrial microorganism Streptomyces avermitilis.</title>
        <authorList>
            <person name="Ikeda H."/>
            <person name="Ishikawa J."/>
            <person name="Hanamoto A."/>
            <person name="Shinose M."/>
            <person name="Kikuchi H."/>
            <person name="Shiba T."/>
            <person name="Sakaki Y."/>
            <person name="Hattori M."/>
            <person name="Omura S."/>
        </authorList>
    </citation>
    <scope>NUCLEOTIDE SEQUENCE [LARGE SCALE GENOMIC DNA]</scope>
    <source>
        <strain>ATCC 31267 / DSM 46492 / JCM 5070 / NBRC 14893 / NCIMB 12804 / NRRL 8165 / MA-4680</strain>
    </source>
</reference>